<reference key="1">
    <citation type="journal article" date="2005" name="BMC Genomics">
        <title>Characterization of 954 bovine full-CDS cDNA sequences.</title>
        <authorList>
            <person name="Harhay G.P."/>
            <person name="Sonstegard T.S."/>
            <person name="Keele J.W."/>
            <person name="Heaton M.P."/>
            <person name="Clawson M.L."/>
            <person name="Snelling W.M."/>
            <person name="Wiedmann R.T."/>
            <person name="Van Tassell C.P."/>
            <person name="Smith T.P.L."/>
        </authorList>
    </citation>
    <scope>NUCLEOTIDE SEQUENCE [LARGE SCALE MRNA]</scope>
</reference>
<proteinExistence type="evidence at transcript level"/>
<feature type="initiator methionine" description="Removed" evidence="1">
    <location>
        <position position="1"/>
    </location>
</feature>
<feature type="chain" id="PRO_0000204785" description="Transgelin-2">
    <location>
        <begin position="2"/>
        <end position="199"/>
    </location>
</feature>
<feature type="domain" description="Calponin-homology (CH)" evidence="2">
    <location>
        <begin position="24"/>
        <end position="136"/>
    </location>
</feature>
<feature type="repeat" description="Calponin-like">
    <location>
        <begin position="174"/>
        <end position="199"/>
    </location>
</feature>
<feature type="modified residue" description="N-acetylalanine" evidence="1">
    <location>
        <position position="2"/>
    </location>
</feature>
<feature type="modified residue" description="Phosphoserine" evidence="1">
    <location>
        <position position="11"/>
    </location>
</feature>
<feature type="modified residue" description="N6-acetyllysine" evidence="1">
    <location>
        <position position="17"/>
    </location>
</feature>
<feature type="modified residue" description="N6-acetyllysine" evidence="1">
    <location>
        <position position="20"/>
    </location>
</feature>
<feature type="modified residue" description="Phosphoserine" evidence="1">
    <location>
        <position position="163"/>
    </location>
</feature>
<feature type="modified residue" description="Phosphothreonine" evidence="1">
    <location>
        <position position="180"/>
    </location>
</feature>
<feature type="modified residue" description="Omega-N-methylarginine" evidence="1">
    <location>
        <position position="182"/>
    </location>
</feature>
<feature type="modified residue" description="Omega-N-methylarginine" evidence="1">
    <location>
        <position position="196"/>
    </location>
</feature>
<feature type="cross-link" description="Glycyl lysine isopeptide (Lys-Gly) (interchain with G-Cter in SUMO2)" evidence="1">
    <location>
        <position position="171"/>
    </location>
</feature>
<gene>
    <name type="primary">TAGLN2</name>
</gene>
<comment type="similarity">
    <text evidence="3">Belongs to the calponin family.</text>
</comment>
<sequence>MANRGPAYGLSREVQQKIEKQYDADLEQILIQWITTQCRKDVGRPQPGRENFQNWLKDGTVLCELINGLYPEGQAPVKKIQASTMAFKQMEQISQFLQAAERYGINTTDIFQTVDLWEGKNMACVQRTLMNLGGLAVARDDGLFSGDPNWFPKKSKENPRYFSDNQLQEGKNVIGLQMGTNRGASQAGMTGYGMPRQIL</sequence>
<keyword id="KW-0007">Acetylation</keyword>
<keyword id="KW-1017">Isopeptide bond</keyword>
<keyword id="KW-0488">Methylation</keyword>
<keyword id="KW-0597">Phosphoprotein</keyword>
<keyword id="KW-1185">Reference proteome</keyword>
<keyword id="KW-0832">Ubl conjugation</keyword>
<organism>
    <name type="scientific">Bos taurus</name>
    <name type="common">Bovine</name>
    <dbReference type="NCBI Taxonomy" id="9913"/>
    <lineage>
        <taxon>Eukaryota</taxon>
        <taxon>Metazoa</taxon>
        <taxon>Chordata</taxon>
        <taxon>Craniata</taxon>
        <taxon>Vertebrata</taxon>
        <taxon>Euteleostomi</taxon>
        <taxon>Mammalia</taxon>
        <taxon>Eutheria</taxon>
        <taxon>Laurasiatheria</taxon>
        <taxon>Artiodactyla</taxon>
        <taxon>Ruminantia</taxon>
        <taxon>Pecora</taxon>
        <taxon>Bovidae</taxon>
        <taxon>Bovinae</taxon>
        <taxon>Bos</taxon>
    </lineage>
</organism>
<dbReference type="EMBL" id="BT020965">
    <property type="protein sequence ID" value="AAX08982.1"/>
    <property type="molecule type" value="mRNA"/>
</dbReference>
<dbReference type="RefSeq" id="NP_001013617.1">
    <property type="nucleotide sequence ID" value="NM_001013599.1"/>
</dbReference>
<dbReference type="RefSeq" id="XP_024840689.1">
    <property type="nucleotide sequence ID" value="XM_024984921.2"/>
</dbReference>
<dbReference type="RefSeq" id="XP_024840691.1">
    <property type="nucleotide sequence ID" value="XM_024984923.2"/>
</dbReference>
<dbReference type="SMR" id="Q5E9F5"/>
<dbReference type="FunCoup" id="Q5E9F5">
    <property type="interactions" value="1079"/>
</dbReference>
<dbReference type="STRING" id="9913.ENSBTAP00000002674"/>
<dbReference type="PaxDb" id="9913-ENSBTAP00000002674"/>
<dbReference type="PeptideAtlas" id="Q5E9F5"/>
<dbReference type="Ensembl" id="ENSBTAT00000002674.3">
    <property type="protein sequence ID" value="ENSBTAP00000002674.2"/>
    <property type="gene ID" value="ENSBTAG00000002068.4"/>
</dbReference>
<dbReference type="GeneID" id="282379"/>
<dbReference type="KEGG" id="bta:282379"/>
<dbReference type="CTD" id="8407"/>
<dbReference type="VEuPathDB" id="HostDB:ENSBTAG00000002068"/>
<dbReference type="VGNC" id="VGNC:35586">
    <property type="gene designation" value="TAGLN2"/>
</dbReference>
<dbReference type="eggNOG" id="KOG2046">
    <property type="taxonomic scope" value="Eukaryota"/>
</dbReference>
<dbReference type="GeneTree" id="ENSGT00940000158886"/>
<dbReference type="HOGENOM" id="CLU_055232_1_0_1"/>
<dbReference type="InParanoid" id="Q5E9F5"/>
<dbReference type="OMA" id="WIKTITG"/>
<dbReference type="OrthoDB" id="21595at2759"/>
<dbReference type="TreeFam" id="TF313921"/>
<dbReference type="Reactome" id="R-BTA-114608">
    <property type="pathway name" value="Platelet degranulation"/>
</dbReference>
<dbReference type="Proteomes" id="UP000009136">
    <property type="component" value="Chromosome 3"/>
</dbReference>
<dbReference type="Bgee" id="ENSBTAG00000002068">
    <property type="expression patterns" value="Expressed in abomasum and 105 other cell types or tissues"/>
</dbReference>
<dbReference type="GO" id="GO:0015629">
    <property type="term" value="C:actin cytoskeleton"/>
    <property type="evidence" value="ECO:0000318"/>
    <property type="project" value="GO_Central"/>
</dbReference>
<dbReference type="GO" id="GO:0051015">
    <property type="term" value="F:actin filament binding"/>
    <property type="evidence" value="ECO:0000318"/>
    <property type="project" value="GO_Central"/>
</dbReference>
<dbReference type="GO" id="GO:0007015">
    <property type="term" value="P:actin filament organization"/>
    <property type="evidence" value="ECO:0000318"/>
    <property type="project" value="GO_Central"/>
</dbReference>
<dbReference type="CDD" id="cd21280">
    <property type="entry name" value="CH_TAGLN2"/>
    <property type="match status" value="1"/>
</dbReference>
<dbReference type="FunFam" id="1.10.418.10:FF:000039">
    <property type="entry name" value="Transgelin"/>
    <property type="match status" value="1"/>
</dbReference>
<dbReference type="Gene3D" id="1.10.418.10">
    <property type="entry name" value="Calponin-like domain"/>
    <property type="match status" value="1"/>
</dbReference>
<dbReference type="InterPro" id="IPR050606">
    <property type="entry name" value="Calponin-like"/>
</dbReference>
<dbReference type="InterPro" id="IPR000557">
    <property type="entry name" value="Calponin_repeat"/>
</dbReference>
<dbReference type="InterPro" id="IPR001715">
    <property type="entry name" value="CH_dom"/>
</dbReference>
<dbReference type="InterPro" id="IPR036872">
    <property type="entry name" value="CH_dom_sf"/>
</dbReference>
<dbReference type="InterPro" id="IPR003096">
    <property type="entry name" value="SM22_calponin"/>
</dbReference>
<dbReference type="PANTHER" id="PTHR47385">
    <property type="entry name" value="CALPONIN"/>
    <property type="match status" value="1"/>
</dbReference>
<dbReference type="PANTHER" id="PTHR47385:SF20">
    <property type="entry name" value="TRANSGELIN-2"/>
    <property type="match status" value="1"/>
</dbReference>
<dbReference type="Pfam" id="PF00402">
    <property type="entry name" value="Calponin"/>
    <property type="match status" value="1"/>
</dbReference>
<dbReference type="Pfam" id="PF00307">
    <property type="entry name" value="CH"/>
    <property type="match status" value="1"/>
</dbReference>
<dbReference type="PRINTS" id="PR00888">
    <property type="entry name" value="SM22CALPONIN"/>
</dbReference>
<dbReference type="PRINTS" id="PR00890">
    <property type="entry name" value="TRANSGELIN"/>
</dbReference>
<dbReference type="SMART" id="SM00033">
    <property type="entry name" value="CH"/>
    <property type="match status" value="1"/>
</dbReference>
<dbReference type="SUPFAM" id="SSF47576">
    <property type="entry name" value="Calponin-homology domain, CH-domain"/>
    <property type="match status" value="1"/>
</dbReference>
<dbReference type="PROSITE" id="PS01052">
    <property type="entry name" value="CALPONIN_1"/>
    <property type="match status" value="1"/>
</dbReference>
<dbReference type="PROSITE" id="PS51122">
    <property type="entry name" value="CALPONIN_2"/>
    <property type="match status" value="1"/>
</dbReference>
<dbReference type="PROSITE" id="PS50021">
    <property type="entry name" value="CH"/>
    <property type="match status" value="1"/>
</dbReference>
<accession>Q5E9F5</accession>
<protein>
    <recommendedName>
        <fullName>Transgelin-2</fullName>
    </recommendedName>
</protein>
<name>TAGL2_BOVIN</name>
<evidence type="ECO:0000250" key="1">
    <source>
        <dbReference type="UniProtKB" id="P37802"/>
    </source>
</evidence>
<evidence type="ECO:0000255" key="2">
    <source>
        <dbReference type="PROSITE-ProRule" id="PRU00044"/>
    </source>
</evidence>
<evidence type="ECO:0000305" key="3"/>